<proteinExistence type="inferred from homology"/>
<gene>
    <name evidence="1" type="primary">hemA</name>
    <name type="ordered locus">IL0926</name>
</gene>
<sequence length="423" mass="46688">MTISALGINHKTASVDLREQVAFSAEQLDAALQAVRNLQGVEEAVIVSTCNRTELYCRGEVSGDLLLGWLTGFHKLAPNALENHHYHFQGEQAITHLMSVASGLDSLVLGEPQILGQVKQAYQAAKRQASVGGILERLFQQTFRVAKTVRNETAVGQNAVSVAYAAVSMARHIFANLQKSKVLLIGAGDTSELVAQHLKQQGVTEILVANRTLQRASEMAERVGATAHSLSELSELLPQADIVVSSTASTLPIVGKGSIEKALKKRRHRPMLLIDLAVPRDIEEQVNELDDAYLYTVDDLQSIISENIRNREQAAREAQVIIQQQTKEFNDWLKSLNSVELVREYRTHTKTLADEQLKKALAQIEQGKDPAEVLQRFSHRLVQQLTHKPTSLLKSAGENNDQYTLAVLQQLWSEPSSDSSKGK</sequence>
<accession>Q5QV08</accession>
<feature type="chain" id="PRO_1000004628" description="Glutamyl-tRNA reductase">
    <location>
        <begin position="1"/>
        <end position="423"/>
    </location>
</feature>
<feature type="active site" description="Nucleophile" evidence="1">
    <location>
        <position position="50"/>
    </location>
</feature>
<feature type="binding site" evidence="1">
    <location>
        <begin position="49"/>
        <end position="52"/>
    </location>
    <ligand>
        <name>substrate</name>
    </ligand>
</feature>
<feature type="binding site" evidence="1">
    <location>
        <position position="106"/>
    </location>
    <ligand>
        <name>substrate</name>
    </ligand>
</feature>
<feature type="binding site" evidence="1">
    <location>
        <begin position="111"/>
        <end position="113"/>
    </location>
    <ligand>
        <name>substrate</name>
    </ligand>
</feature>
<feature type="binding site" evidence="1">
    <location>
        <position position="117"/>
    </location>
    <ligand>
        <name>substrate</name>
    </ligand>
</feature>
<feature type="binding site" evidence="1">
    <location>
        <begin position="186"/>
        <end position="191"/>
    </location>
    <ligand>
        <name>NADP(+)</name>
        <dbReference type="ChEBI" id="CHEBI:58349"/>
    </ligand>
</feature>
<feature type="site" description="Important for activity" evidence="1">
    <location>
        <position position="96"/>
    </location>
</feature>
<dbReference type="EC" id="1.2.1.70" evidence="1"/>
<dbReference type="EMBL" id="AE017340">
    <property type="protein sequence ID" value="AAV81766.1"/>
    <property type="molecule type" value="Genomic_DNA"/>
</dbReference>
<dbReference type="RefSeq" id="WP_011234177.1">
    <property type="nucleotide sequence ID" value="NC_006512.1"/>
</dbReference>
<dbReference type="SMR" id="Q5QV08"/>
<dbReference type="STRING" id="283942.IL0926"/>
<dbReference type="GeneID" id="41336081"/>
<dbReference type="KEGG" id="ilo:IL0926"/>
<dbReference type="eggNOG" id="COG0373">
    <property type="taxonomic scope" value="Bacteria"/>
</dbReference>
<dbReference type="HOGENOM" id="CLU_035113_2_2_6"/>
<dbReference type="OrthoDB" id="110209at2"/>
<dbReference type="UniPathway" id="UPA00251">
    <property type="reaction ID" value="UER00316"/>
</dbReference>
<dbReference type="Proteomes" id="UP000001171">
    <property type="component" value="Chromosome"/>
</dbReference>
<dbReference type="GO" id="GO:0008883">
    <property type="term" value="F:glutamyl-tRNA reductase activity"/>
    <property type="evidence" value="ECO:0007669"/>
    <property type="project" value="UniProtKB-UniRule"/>
</dbReference>
<dbReference type="GO" id="GO:0050661">
    <property type="term" value="F:NADP binding"/>
    <property type="evidence" value="ECO:0007669"/>
    <property type="project" value="InterPro"/>
</dbReference>
<dbReference type="GO" id="GO:0019353">
    <property type="term" value="P:protoporphyrinogen IX biosynthetic process from glutamate"/>
    <property type="evidence" value="ECO:0007669"/>
    <property type="project" value="TreeGrafter"/>
</dbReference>
<dbReference type="CDD" id="cd05213">
    <property type="entry name" value="NAD_bind_Glutamyl_tRNA_reduct"/>
    <property type="match status" value="1"/>
</dbReference>
<dbReference type="FunFam" id="3.30.460.30:FF:000001">
    <property type="entry name" value="Glutamyl-tRNA reductase"/>
    <property type="match status" value="1"/>
</dbReference>
<dbReference type="FunFam" id="3.40.50.720:FF:000031">
    <property type="entry name" value="Glutamyl-tRNA reductase"/>
    <property type="match status" value="1"/>
</dbReference>
<dbReference type="Gene3D" id="3.30.460.30">
    <property type="entry name" value="Glutamyl-tRNA reductase, N-terminal domain"/>
    <property type="match status" value="1"/>
</dbReference>
<dbReference type="Gene3D" id="3.40.50.720">
    <property type="entry name" value="NAD(P)-binding Rossmann-like Domain"/>
    <property type="match status" value="1"/>
</dbReference>
<dbReference type="HAMAP" id="MF_00087">
    <property type="entry name" value="Glu_tRNA_reductase"/>
    <property type="match status" value="1"/>
</dbReference>
<dbReference type="InterPro" id="IPR000343">
    <property type="entry name" value="4pyrrol_synth_GluRdtase"/>
</dbReference>
<dbReference type="InterPro" id="IPR015896">
    <property type="entry name" value="4pyrrol_synth_GluRdtase_dimer"/>
</dbReference>
<dbReference type="InterPro" id="IPR015895">
    <property type="entry name" value="4pyrrol_synth_GluRdtase_N"/>
</dbReference>
<dbReference type="InterPro" id="IPR018214">
    <property type="entry name" value="GluRdtase_CS"/>
</dbReference>
<dbReference type="InterPro" id="IPR036453">
    <property type="entry name" value="GluRdtase_dimer_dom_sf"/>
</dbReference>
<dbReference type="InterPro" id="IPR036343">
    <property type="entry name" value="GluRdtase_N_sf"/>
</dbReference>
<dbReference type="InterPro" id="IPR036291">
    <property type="entry name" value="NAD(P)-bd_dom_sf"/>
</dbReference>
<dbReference type="InterPro" id="IPR006151">
    <property type="entry name" value="Shikm_DH/Glu-tRNA_Rdtase"/>
</dbReference>
<dbReference type="NCBIfam" id="TIGR01035">
    <property type="entry name" value="hemA"/>
    <property type="match status" value="1"/>
</dbReference>
<dbReference type="PANTHER" id="PTHR43013">
    <property type="entry name" value="GLUTAMYL-TRNA REDUCTASE"/>
    <property type="match status" value="1"/>
</dbReference>
<dbReference type="PANTHER" id="PTHR43013:SF1">
    <property type="entry name" value="GLUTAMYL-TRNA REDUCTASE"/>
    <property type="match status" value="1"/>
</dbReference>
<dbReference type="Pfam" id="PF00745">
    <property type="entry name" value="GlutR_dimer"/>
    <property type="match status" value="1"/>
</dbReference>
<dbReference type="Pfam" id="PF05201">
    <property type="entry name" value="GlutR_N"/>
    <property type="match status" value="1"/>
</dbReference>
<dbReference type="Pfam" id="PF01488">
    <property type="entry name" value="Shikimate_DH"/>
    <property type="match status" value="1"/>
</dbReference>
<dbReference type="PIRSF" id="PIRSF000445">
    <property type="entry name" value="4pyrrol_synth_GluRdtase"/>
    <property type="match status" value="1"/>
</dbReference>
<dbReference type="SUPFAM" id="SSF69742">
    <property type="entry name" value="Glutamyl tRNA-reductase catalytic, N-terminal domain"/>
    <property type="match status" value="1"/>
</dbReference>
<dbReference type="SUPFAM" id="SSF69075">
    <property type="entry name" value="Glutamyl tRNA-reductase dimerization domain"/>
    <property type="match status" value="1"/>
</dbReference>
<dbReference type="SUPFAM" id="SSF51735">
    <property type="entry name" value="NAD(P)-binding Rossmann-fold domains"/>
    <property type="match status" value="1"/>
</dbReference>
<dbReference type="PROSITE" id="PS00747">
    <property type="entry name" value="GLUTR"/>
    <property type="match status" value="1"/>
</dbReference>
<evidence type="ECO:0000255" key="1">
    <source>
        <dbReference type="HAMAP-Rule" id="MF_00087"/>
    </source>
</evidence>
<comment type="function">
    <text evidence="1">Catalyzes the NADPH-dependent reduction of glutamyl-tRNA(Glu) to glutamate 1-semialdehyde (GSA).</text>
</comment>
<comment type="catalytic activity">
    <reaction evidence="1">
        <text>(S)-4-amino-5-oxopentanoate + tRNA(Glu) + NADP(+) = L-glutamyl-tRNA(Glu) + NADPH + H(+)</text>
        <dbReference type="Rhea" id="RHEA:12344"/>
        <dbReference type="Rhea" id="RHEA-COMP:9663"/>
        <dbReference type="Rhea" id="RHEA-COMP:9680"/>
        <dbReference type="ChEBI" id="CHEBI:15378"/>
        <dbReference type="ChEBI" id="CHEBI:57501"/>
        <dbReference type="ChEBI" id="CHEBI:57783"/>
        <dbReference type="ChEBI" id="CHEBI:58349"/>
        <dbReference type="ChEBI" id="CHEBI:78442"/>
        <dbReference type="ChEBI" id="CHEBI:78520"/>
        <dbReference type="EC" id="1.2.1.70"/>
    </reaction>
</comment>
<comment type="pathway">
    <text evidence="1">Porphyrin-containing compound metabolism; protoporphyrin-IX biosynthesis; 5-aminolevulinate from L-glutamyl-tRNA(Glu): step 1/2.</text>
</comment>
<comment type="subunit">
    <text evidence="1">Homodimer.</text>
</comment>
<comment type="domain">
    <text evidence="1">Possesses an unusual extended V-shaped dimeric structure with each monomer consisting of three distinct domains arranged along a curved 'spinal' alpha-helix. The N-terminal catalytic domain specifically recognizes the glutamate moiety of the substrate. The second domain is the NADPH-binding domain, and the third C-terminal domain is responsible for dimerization.</text>
</comment>
<comment type="miscellaneous">
    <text evidence="1">During catalysis, the active site Cys acts as a nucleophile attacking the alpha-carbonyl group of tRNA-bound glutamate with the formation of a thioester intermediate between enzyme and glutamate, and the concomitant release of tRNA(Glu). The thioester intermediate is finally reduced by direct hydride transfer from NADPH, to form the product GSA.</text>
</comment>
<comment type="similarity">
    <text evidence="1">Belongs to the glutamyl-tRNA reductase family.</text>
</comment>
<protein>
    <recommendedName>
        <fullName evidence="1">Glutamyl-tRNA reductase</fullName>
        <shortName evidence="1">GluTR</shortName>
        <ecNumber evidence="1">1.2.1.70</ecNumber>
    </recommendedName>
</protein>
<name>HEM1_IDILO</name>
<keyword id="KW-0521">NADP</keyword>
<keyword id="KW-0560">Oxidoreductase</keyword>
<keyword id="KW-0627">Porphyrin biosynthesis</keyword>
<keyword id="KW-1185">Reference proteome</keyword>
<reference key="1">
    <citation type="journal article" date="2004" name="Proc. Natl. Acad. Sci. U.S.A.">
        <title>Genome sequence of the deep-sea gamma-proteobacterium Idiomarina loihiensis reveals amino acid fermentation as a source of carbon and energy.</title>
        <authorList>
            <person name="Hou S."/>
            <person name="Saw J.H."/>
            <person name="Lee K.S."/>
            <person name="Freitas T.A."/>
            <person name="Belisle C."/>
            <person name="Kawarabayasi Y."/>
            <person name="Donachie S.P."/>
            <person name="Pikina A."/>
            <person name="Galperin M.Y."/>
            <person name="Koonin E.V."/>
            <person name="Makarova K.S."/>
            <person name="Omelchenko M.V."/>
            <person name="Sorokin A."/>
            <person name="Wolf Y.I."/>
            <person name="Li Q.X."/>
            <person name="Keum Y.S."/>
            <person name="Campbell S."/>
            <person name="Denery J."/>
            <person name="Aizawa S."/>
            <person name="Shibata S."/>
            <person name="Malahoff A."/>
            <person name="Alam M."/>
        </authorList>
    </citation>
    <scope>NUCLEOTIDE SEQUENCE [LARGE SCALE GENOMIC DNA]</scope>
    <source>
        <strain>ATCC BAA-735 / DSM 15497 / L2-TR</strain>
    </source>
</reference>
<organism>
    <name type="scientific">Idiomarina loihiensis (strain ATCC BAA-735 / DSM 15497 / L2-TR)</name>
    <dbReference type="NCBI Taxonomy" id="283942"/>
    <lineage>
        <taxon>Bacteria</taxon>
        <taxon>Pseudomonadati</taxon>
        <taxon>Pseudomonadota</taxon>
        <taxon>Gammaproteobacteria</taxon>
        <taxon>Alteromonadales</taxon>
        <taxon>Idiomarinaceae</taxon>
        <taxon>Idiomarina</taxon>
    </lineage>
</organism>